<dbReference type="EMBL" id="AF002109">
    <property type="protein sequence ID" value="AAB95293.1"/>
    <property type="molecule type" value="Genomic_DNA"/>
</dbReference>
<dbReference type="EMBL" id="CP002685">
    <property type="protein sequence ID" value="AEC09773.1"/>
    <property type="molecule type" value="Genomic_DNA"/>
</dbReference>
<dbReference type="EMBL" id="AY035183">
    <property type="protein sequence ID" value="AAK59687.1"/>
    <property type="molecule type" value="mRNA"/>
</dbReference>
<dbReference type="EMBL" id="AY062963">
    <property type="protein sequence ID" value="AAL33809.1"/>
    <property type="molecule type" value="mRNA"/>
</dbReference>
<dbReference type="EMBL" id="AY088748">
    <property type="protein sequence ID" value="AAM67064.1"/>
    <property type="molecule type" value="mRNA"/>
</dbReference>
<dbReference type="PIR" id="A84825">
    <property type="entry name" value="A84825"/>
</dbReference>
<dbReference type="RefSeq" id="NP_565922.1">
    <property type="nucleotide sequence ID" value="NM_129566.2"/>
</dbReference>
<dbReference type="SMR" id="O04211"/>
<dbReference type="BioGRID" id="3934">
    <property type="interactions" value="19"/>
</dbReference>
<dbReference type="ComplexPortal" id="CPX-1291">
    <property type="entry name" value="Evening Complex"/>
</dbReference>
<dbReference type="FunCoup" id="O04211">
    <property type="interactions" value="40"/>
</dbReference>
<dbReference type="IntAct" id="O04211">
    <property type="interactions" value="9"/>
</dbReference>
<dbReference type="STRING" id="3702.O04211"/>
<dbReference type="iPTMnet" id="O04211"/>
<dbReference type="MetOSite" id="O04211"/>
<dbReference type="PaxDb" id="3702-AT2G40080.1"/>
<dbReference type="ProteomicsDB" id="221942"/>
<dbReference type="EnsemblPlants" id="AT2G40080.1">
    <property type="protein sequence ID" value="AT2G40080.1"/>
    <property type="gene ID" value="AT2G40080"/>
</dbReference>
<dbReference type="GeneID" id="818596"/>
<dbReference type="Gramene" id="AT2G40080.1">
    <property type="protein sequence ID" value="AT2G40080.1"/>
    <property type="gene ID" value="AT2G40080"/>
</dbReference>
<dbReference type="KEGG" id="ath:AT2G40080"/>
<dbReference type="Araport" id="AT2G40080"/>
<dbReference type="TAIR" id="AT2G40080">
    <property type="gene designation" value="ELF4"/>
</dbReference>
<dbReference type="eggNOG" id="ENOG502S43Z">
    <property type="taxonomic scope" value="Eukaryota"/>
</dbReference>
<dbReference type="HOGENOM" id="CLU_119738_2_1_1"/>
<dbReference type="InParanoid" id="O04211"/>
<dbReference type="OMA" id="VCQHRSK"/>
<dbReference type="OrthoDB" id="1895690at2759"/>
<dbReference type="PhylomeDB" id="O04211"/>
<dbReference type="PRO" id="PR:O04211"/>
<dbReference type="Proteomes" id="UP000006548">
    <property type="component" value="Chromosome 2"/>
</dbReference>
<dbReference type="ExpressionAtlas" id="O04211">
    <property type="expression patterns" value="baseline and differential"/>
</dbReference>
<dbReference type="GO" id="GO:0005634">
    <property type="term" value="C:nucleus"/>
    <property type="evidence" value="ECO:0000314"/>
    <property type="project" value="TAIR"/>
</dbReference>
<dbReference type="GO" id="GO:0005667">
    <property type="term" value="C:transcription regulator complex"/>
    <property type="evidence" value="ECO:0000314"/>
    <property type="project" value="ComplexPortal"/>
</dbReference>
<dbReference type="GO" id="GO:0042803">
    <property type="term" value="F:protein homodimerization activity"/>
    <property type="evidence" value="ECO:0000314"/>
    <property type="project" value="UniProtKB"/>
</dbReference>
<dbReference type="GO" id="GO:0009649">
    <property type="term" value="P:entrainment of circadian clock"/>
    <property type="evidence" value="ECO:0000315"/>
    <property type="project" value="UniProtKB"/>
</dbReference>
<dbReference type="GO" id="GO:0009908">
    <property type="term" value="P:flower development"/>
    <property type="evidence" value="ECO:0007669"/>
    <property type="project" value="UniProtKB-KW"/>
</dbReference>
<dbReference type="GO" id="GO:0000122">
    <property type="term" value="P:negative regulation of transcription by RNA polymerase II"/>
    <property type="evidence" value="ECO:0000314"/>
    <property type="project" value="ComplexPortal"/>
</dbReference>
<dbReference type="GO" id="GO:0009648">
    <property type="term" value="P:photoperiodism"/>
    <property type="evidence" value="ECO:0000315"/>
    <property type="project" value="TAIR"/>
</dbReference>
<dbReference type="GO" id="GO:0048573">
    <property type="term" value="P:photoperiodism, flowering"/>
    <property type="evidence" value="ECO:0000315"/>
    <property type="project" value="TAIR"/>
</dbReference>
<dbReference type="GO" id="GO:0042753">
    <property type="term" value="P:positive regulation of circadian rhythm"/>
    <property type="evidence" value="ECO:0000315"/>
    <property type="project" value="UniProtKB"/>
</dbReference>
<dbReference type="GO" id="GO:0010017">
    <property type="term" value="P:red or far-red light signaling pathway"/>
    <property type="evidence" value="ECO:0000315"/>
    <property type="project" value="TAIR"/>
</dbReference>
<dbReference type="GO" id="GO:0009585">
    <property type="term" value="P:red, far-red light phototransduction"/>
    <property type="evidence" value="ECO:0007669"/>
    <property type="project" value="UniProtKB-KW"/>
</dbReference>
<dbReference type="GO" id="GO:0042752">
    <property type="term" value="P:regulation of circadian rhythm"/>
    <property type="evidence" value="ECO:0000314"/>
    <property type="project" value="ComplexPortal"/>
</dbReference>
<dbReference type="GO" id="GO:0009909">
    <property type="term" value="P:regulation of flower development"/>
    <property type="evidence" value="ECO:0000315"/>
    <property type="project" value="TAIR"/>
</dbReference>
<dbReference type="GO" id="GO:0010114">
    <property type="term" value="P:response to red light"/>
    <property type="evidence" value="ECO:0000315"/>
    <property type="project" value="TAIR"/>
</dbReference>
<dbReference type="GO" id="GO:0048511">
    <property type="term" value="P:rhythmic process"/>
    <property type="evidence" value="ECO:0007669"/>
    <property type="project" value="UniProtKB-KW"/>
</dbReference>
<dbReference type="InterPro" id="IPR040462">
    <property type="entry name" value="EARLY_FLOWERING_4"/>
</dbReference>
<dbReference type="InterPro" id="IPR009741">
    <property type="entry name" value="EARLY_FLOWERING_4_dom"/>
</dbReference>
<dbReference type="PANTHER" id="PTHR33469:SF5">
    <property type="entry name" value="PROTEIN EARLY FLOWERING 4"/>
    <property type="match status" value="1"/>
</dbReference>
<dbReference type="PANTHER" id="PTHR33469">
    <property type="entry name" value="PROTEIN ELF4-LIKE 4"/>
    <property type="match status" value="1"/>
</dbReference>
<dbReference type="Pfam" id="PF07011">
    <property type="entry name" value="Elf4"/>
    <property type="match status" value="1"/>
</dbReference>
<reference key="1">
    <citation type="journal article" date="1999" name="Nature">
        <title>Sequence and analysis of chromosome 2 of the plant Arabidopsis thaliana.</title>
        <authorList>
            <person name="Lin X."/>
            <person name="Kaul S."/>
            <person name="Rounsley S.D."/>
            <person name="Shea T.P."/>
            <person name="Benito M.-I."/>
            <person name="Town C.D."/>
            <person name="Fujii C.Y."/>
            <person name="Mason T.M."/>
            <person name="Bowman C.L."/>
            <person name="Barnstead M.E."/>
            <person name="Feldblyum T.V."/>
            <person name="Buell C.R."/>
            <person name="Ketchum K.A."/>
            <person name="Lee J.J."/>
            <person name="Ronning C.M."/>
            <person name="Koo H.L."/>
            <person name="Moffat K.S."/>
            <person name="Cronin L.A."/>
            <person name="Shen M."/>
            <person name="Pai G."/>
            <person name="Van Aken S."/>
            <person name="Umayam L."/>
            <person name="Tallon L.J."/>
            <person name="Gill J.E."/>
            <person name="Adams M.D."/>
            <person name="Carrera A.J."/>
            <person name="Creasy T.H."/>
            <person name="Goodman H.M."/>
            <person name="Somerville C.R."/>
            <person name="Copenhaver G.P."/>
            <person name="Preuss D."/>
            <person name="Nierman W.C."/>
            <person name="White O."/>
            <person name="Eisen J.A."/>
            <person name="Salzberg S.L."/>
            <person name="Fraser C.M."/>
            <person name="Venter J.C."/>
        </authorList>
    </citation>
    <scope>NUCLEOTIDE SEQUENCE [LARGE SCALE GENOMIC DNA]</scope>
    <source>
        <strain>cv. Columbia</strain>
    </source>
</reference>
<reference key="2">
    <citation type="journal article" date="2017" name="Plant J.">
        <title>Araport11: a complete reannotation of the Arabidopsis thaliana reference genome.</title>
        <authorList>
            <person name="Cheng C.Y."/>
            <person name="Krishnakumar V."/>
            <person name="Chan A.P."/>
            <person name="Thibaud-Nissen F."/>
            <person name="Schobel S."/>
            <person name="Town C.D."/>
        </authorList>
    </citation>
    <scope>GENOME REANNOTATION</scope>
    <source>
        <strain>cv. Columbia</strain>
    </source>
</reference>
<reference key="3">
    <citation type="journal article" date="2003" name="Science">
        <title>Empirical analysis of transcriptional activity in the Arabidopsis genome.</title>
        <authorList>
            <person name="Yamada K."/>
            <person name="Lim J."/>
            <person name="Dale J.M."/>
            <person name="Chen H."/>
            <person name="Shinn P."/>
            <person name="Palm C.J."/>
            <person name="Southwick A.M."/>
            <person name="Wu H.C."/>
            <person name="Kim C.J."/>
            <person name="Nguyen M."/>
            <person name="Pham P.K."/>
            <person name="Cheuk R.F."/>
            <person name="Karlin-Newmann G."/>
            <person name="Liu S.X."/>
            <person name="Lam B."/>
            <person name="Sakano H."/>
            <person name="Wu T."/>
            <person name="Yu G."/>
            <person name="Miranda M."/>
            <person name="Quach H.L."/>
            <person name="Tripp M."/>
            <person name="Chang C.H."/>
            <person name="Lee J.M."/>
            <person name="Toriumi M.J."/>
            <person name="Chan M.M."/>
            <person name="Tang C.C."/>
            <person name="Onodera C.S."/>
            <person name="Deng J.M."/>
            <person name="Akiyama K."/>
            <person name="Ansari Y."/>
            <person name="Arakawa T."/>
            <person name="Banh J."/>
            <person name="Banno F."/>
            <person name="Bowser L."/>
            <person name="Brooks S.Y."/>
            <person name="Carninci P."/>
            <person name="Chao Q."/>
            <person name="Choy N."/>
            <person name="Enju A."/>
            <person name="Goldsmith A.D."/>
            <person name="Gurjal M."/>
            <person name="Hansen N.F."/>
            <person name="Hayashizaki Y."/>
            <person name="Johnson-Hopson C."/>
            <person name="Hsuan V.W."/>
            <person name="Iida K."/>
            <person name="Karnes M."/>
            <person name="Khan S."/>
            <person name="Koesema E."/>
            <person name="Ishida J."/>
            <person name="Jiang P.X."/>
            <person name="Jones T."/>
            <person name="Kawai J."/>
            <person name="Kamiya A."/>
            <person name="Meyers C."/>
            <person name="Nakajima M."/>
            <person name="Narusaka M."/>
            <person name="Seki M."/>
            <person name="Sakurai T."/>
            <person name="Satou M."/>
            <person name="Tamse R."/>
            <person name="Vaysberg M."/>
            <person name="Wallender E.K."/>
            <person name="Wong C."/>
            <person name="Yamamura Y."/>
            <person name="Yuan S."/>
            <person name="Shinozaki K."/>
            <person name="Davis R.W."/>
            <person name="Theologis A."/>
            <person name="Ecker J.R."/>
        </authorList>
    </citation>
    <scope>NUCLEOTIDE SEQUENCE [LARGE SCALE MRNA]</scope>
    <source>
        <strain>cv. Columbia</strain>
    </source>
</reference>
<reference key="4">
    <citation type="submission" date="2002-03" db="EMBL/GenBank/DDBJ databases">
        <title>Full-length cDNA from Arabidopsis thaliana.</title>
        <authorList>
            <person name="Brover V.V."/>
            <person name="Troukhan M.E."/>
            <person name="Alexandrov N.A."/>
            <person name="Lu Y.-P."/>
            <person name="Flavell R.B."/>
            <person name="Feldmann K.A."/>
        </authorList>
    </citation>
    <scope>NUCLEOTIDE SEQUENCE [LARGE SCALE MRNA]</scope>
</reference>
<reference key="5">
    <citation type="journal article" date="2002" name="Nature">
        <title>The ELF4 gene controls circadian rhythms and flowering time in Arabidopsis thaliana.</title>
        <authorList>
            <person name="Doyle M.R."/>
            <person name="Davis S.J."/>
            <person name="Bastow R.M."/>
            <person name="McWatters H.G."/>
            <person name="Kozma-Bognar L."/>
            <person name="Nagy F."/>
            <person name="Millar A.J."/>
            <person name="Amasino R.M."/>
        </authorList>
    </citation>
    <scope>FUNCTION</scope>
    <scope>DISRUPTION PHENOTYPE</scope>
    <source>
        <strain>cv. Wassilewskija</strain>
    </source>
</reference>
<reference key="6">
    <citation type="journal article" date="2003" name="Plant Physiol.">
        <title>EARLY FLOWERING 4 functions in phytochrome B-regulated seedling de-etiolation.</title>
        <authorList>
            <person name="Khanna R."/>
            <person name="Kikis E.A."/>
            <person name="Quail P.H."/>
        </authorList>
    </citation>
    <scope>FUNCTION</scope>
    <scope>DISRUPTION PHENOTYPE</scope>
    <scope>SUBCELLULAR LOCATION</scope>
    <scope>INDUCTION BY RED LIGHT</scope>
    <scope>GENE FAMILY</scope>
    <source>
        <strain>cv. Columbia</strain>
    </source>
</reference>
<reference key="7">
    <citation type="journal article" date="2005" name="Plant J.">
        <title>HUA2 is required for the expression of floral repressors in Arabidopsis thaliana.</title>
        <authorList>
            <person name="Doyle M.R."/>
            <person name="Bizzell C.M."/>
            <person name="Keller M.R."/>
            <person name="Michaels S.D."/>
            <person name="Song J."/>
            <person name="Noh Y.-S."/>
            <person name="Amasino R.M."/>
        </authorList>
    </citation>
    <scope>FUNCTION</scope>
    <scope>DISRUPTION PHENOTYPE</scope>
    <source>
        <strain>cv. Columbia</strain>
        <strain>cv. Wassilewskija</strain>
    </source>
</reference>
<reference key="8">
    <citation type="journal article" date="2005" name="Plant J.">
        <title>ELF4 is a phytochrome-regulated component of a negative-feedback loop involving the central oscillator components CCA1 and LHY.</title>
        <authorList>
            <person name="Kikis E.A."/>
            <person name="Khanna R."/>
            <person name="Quail P.H."/>
        </authorList>
    </citation>
    <scope>FUNCTION</scope>
    <scope>DISRUPTION PHENOTYPE</scope>
    <scope>INDUCTION BY LIGHT</scope>
</reference>
<reference key="9">
    <citation type="journal article" date="2005" name="Plant Physiol.">
        <title>Rapid array mapping of circadian clock and developmental mutations in Arabidopsis.</title>
        <authorList>
            <person name="Hazen S.P."/>
            <person name="Borevitz J.O."/>
            <person name="Harmon F.G."/>
            <person name="Pruneda-Paz J.L."/>
            <person name="Schultz T.F."/>
            <person name="Yanovsky M.J."/>
            <person name="Liljegren S.J."/>
            <person name="Ecker J.R."/>
            <person name="Kay S.A."/>
        </authorList>
    </citation>
    <scope>FUNCTION</scope>
    <scope>DISRUPTION PHENOTYPE</scope>
    <source>
        <strain>cv. Columbia</strain>
    </source>
</reference>
<reference key="10">
    <citation type="journal article" date="2006" name="J. Exp. Bot.">
        <title>Gene profiling of the red light signalling pathways in roots.</title>
        <authorList>
            <person name="Molas M.L."/>
            <person name="Kiss J.Z."/>
            <person name="Correll M.J."/>
        </authorList>
    </citation>
    <scope>INDUCTION BY RED LIGHT</scope>
</reference>
<reference key="11">
    <citation type="journal article" date="2007" name="Plant Physiol.">
        <title>ELF4 is required for oscillatory properties of the circadian clock.</title>
        <authorList>
            <person name="McWatters H.G."/>
            <person name="Kolmos E."/>
            <person name="Hall A."/>
            <person name="Doyle M.R."/>
            <person name="Amasino R.M."/>
            <person name="Gyula P."/>
            <person name="Nagy F."/>
            <person name="Millar A.J."/>
            <person name="Davis S.J."/>
        </authorList>
    </citation>
    <scope>FUNCTION</scope>
    <scope>DISRUPTION PHENOTYPE</scope>
    <source>
        <strain>cv. Wassilewskija</strain>
    </source>
</reference>
<reference key="12">
    <citation type="journal article" date="2008" name="Plant Physiol.">
        <title>Two new clock proteins, LWD1 and LWD2, regulate Arabidopsis photoperiodic flowering.</title>
        <authorList>
            <person name="Wu J.-F."/>
            <person name="Wang Y."/>
            <person name="Wu S.-H."/>
        </authorList>
    </citation>
    <scope>INDUCTION BY CIRCADIAN RHYTHM</scope>
    <source>
        <strain>cv. Columbia</strain>
    </source>
</reference>
<reference key="13">
    <citation type="journal article" date="2009" name="HFSP J.">
        <title>Integrating ELF4 into the circadian system through combined structural and functional studies.</title>
        <authorList>
            <person name="Kolmos E."/>
            <person name="Nowak M."/>
            <person name="Werner M."/>
            <person name="Fischer K."/>
            <person name="Schwarz G."/>
            <person name="Mathews S."/>
            <person name="Schoof H."/>
            <person name="Nagy F."/>
            <person name="Bujnicki J.M."/>
            <person name="Davis S.J."/>
        </authorList>
    </citation>
    <scope>FUNCTION</scope>
    <scope>DISRUPTION PHENOTYPE</scope>
    <scope>MUTAGENESIS OF GLU-15; GLU-18; PRO-23; ARG-31; ARG-34; ARG-44; SER-45; ALA-59 AND GLY-74</scope>
    <scope>INDUCTION BY LIGHT</scope>
    <scope>HOMODIMERIZATION</scope>
    <scope>GENE FAMILY</scope>
    <scope>NOMENCLATURE</scope>
    <source>
        <strain>cv. Columbia</strain>
        <strain>cv. Wassilewskija</strain>
    </source>
</reference>
<reference key="14">
    <citation type="journal article" date="2009" name="Plant Physiol.">
        <title>Large-scale Arabidopsis phosphoproteome profiling reveals novel chloroplast kinase substrates and phosphorylation networks.</title>
        <authorList>
            <person name="Reiland S."/>
            <person name="Messerli G."/>
            <person name="Baerenfaller K."/>
            <person name="Gerrits B."/>
            <person name="Endler A."/>
            <person name="Grossmann J."/>
            <person name="Gruissem W."/>
            <person name="Baginsky S."/>
        </authorList>
    </citation>
    <scope>PHOSPHORYLATION [LARGE SCALE ANALYSIS] AT SER-45</scope>
    <scope>IDENTIFICATION BY MASS SPECTROMETRY [LARGE SCALE ANALYSIS]</scope>
</reference>
<reference key="15">
    <citation type="journal article" date="2011" name="Plant J.">
        <title>Light inputs shape the Arabidopsis circadian system.</title>
        <authorList>
            <person name="Wenden B."/>
            <person name="Kozma-Bognar L."/>
            <person name="Edwards K.D."/>
            <person name="Hall A.J."/>
            <person name="Locke J.C.W."/>
            <person name="Millar A.J."/>
        </authorList>
    </citation>
    <scope>FUNCTION</scope>
    <scope>DISRUPTION PHENOTYPE</scope>
    <scope>INDUCTION BY CIRCADIAN RHYTHM</scope>
    <source>
        <strain>cv. Columbia</strain>
    </source>
</reference>
<reference key="16">
    <citation type="journal article" date="2012" name="Plant Cell">
        <title>EARLY FLOWERING4 recruitment of EARLY FLOWERING3 in the nucleus sustains the Arabidopsis circadian clock.</title>
        <authorList>
            <person name="Herrero E."/>
            <person name="Kolmos E."/>
            <person name="Bujdoso N."/>
            <person name="Yuan Y."/>
            <person name="Wang M."/>
            <person name="Berns M.C."/>
            <person name="Uhlworm H."/>
            <person name="Coupland G."/>
            <person name="Saini R."/>
            <person name="Jaskolski M."/>
            <person name="Webb A."/>
            <person name="Goncalves J."/>
            <person name="Davis S.J."/>
        </authorList>
    </citation>
    <scope>FUNCTION</scope>
    <scope>INTERACTION WITH ELF3</scope>
    <scope>SUBCELLULAR LOCATION</scope>
</reference>
<name>ELF4_ARATH</name>
<evidence type="ECO:0000256" key="1">
    <source>
        <dbReference type="SAM" id="MobiDB-lite"/>
    </source>
</evidence>
<evidence type="ECO:0000269" key="2">
    <source>
    </source>
</evidence>
<evidence type="ECO:0000269" key="3">
    <source>
    </source>
</evidence>
<evidence type="ECO:0000269" key="4">
    <source>
    </source>
</evidence>
<evidence type="ECO:0000269" key="5">
    <source>
    </source>
</evidence>
<evidence type="ECO:0000269" key="6">
    <source>
    </source>
</evidence>
<evidence type="ECO:0000269" key="7">
    <source>
    </source>
</evidence>
<evidence type="ECO:0000269" key="8">
    <source>
    </source>
</evidence>
<evidence type="ECO:0000269" key="9">
    <source>
    </source>
</evidence>
<evidence type="ECO:0000269" key="10">
    <source>
    </source>
</evidence>
<evidence type="ECO:0000269" key="11">
    <source>
    </source>
</evidence>
<evidence type="ECO:0000269" key="12">
    <source>
    </source>
</evidence>
<evidence type="ECO:0000305" key="13"/>
<evidence type="ECO:0007744" key="14">
    <source>
    </source>
</evidence>
<gene>
    <name type="primary">ELF4</name>
    <name type="synonym">ARR08</name>
    <name type="synonym">ARR16</name>
    <name type="synonym">ARR19</name>
    <name type="synonym">ARR44</name>
    <name type="synonym">ARR80</name>
    <name type="ordered locus">At2g40080</name>
    <name type="ORF">T28M21.24</name>
</gene>
<organism>
    <name type="scientific">Arabidopsis thaliana</name>
    <name type="common">Mouse-ear cress</name>
    <dbReference type="NCBI Taxonomy" id="3702"/>
    <lineage>
        <taxon>Eukaryota</taxon>
        <taxon>Viridiplantae</taxon>
        <taxon>Streptophyta</taxon>
        <taxon>Embryophyta</taxon>
        <taxon>Tracheophyta</taxon>
        <taxon>Spermatophyta</taxon>
        <taxon>Magnoliopsida</taxon>
        <taxon>eudicotyledons</taxon>
        <taxon>Gunneridae</taxon>
        <taxon>Pentapetalae</taxon>
        <taxon>rosids</taxon>
        <taxon>malvids</taxon>
        <taxon>Brassicales</taxon>
        <taxon>Brassicaceae</taxon>
        <taxon>Camelineae</taxon>
        <taxon>Arabidopsis</taxon>
    </lineage>
</organism>
<comment type="function">
    <text evidence="2 3 4 5 6 8 10 11 12">Component of the central CCA1/LHY-TOC1 feedback loop in the circadian clock that promotes clock accuracy and is required for sustained rhythms in the absence of daily light/dark cycles. Part of a corepressor complex consisting of ELF4, ELF3, and LUX involved in the transcriptional regulation of APRR9. Increases ELF3 nuclear distribution and localization in nuclear bodies. Required for responsiveness to continuous red, by regulating phytochrome B (phyB) signaling (including during seedling de-etiolation) and gene expression. Mediates both entrainment to an environmental cycle and circadian rhythm sustainability under constant conditions. Controls flowering time. Necessary for light-induced expression of both CCA1 and LHY.</text>
</comment>
<comment type="subunit">
    <text evidence="12">Homodimer. Interacts with ELF3.</text>
</comment>
<comment type="interaction">
    <interactant intactId="EBI-16415004">
        <id>O04211</id>
    </interactant>
    <interactant intactId="EBI-16415030">
        <id>O82804</id>
        <label>ELF3</label>
    </interactant>
    <organismsDiffer>false</organismsDiffer>
    <experiments>4</experiments>
</comment>
<comment type="subcellular location">
    <subcellularLocation>
        <location evidence="3 12">Nucleus</location>
    </subcellularLocation>
    <text evidence="12">Diffuse distribution. Targeted to nuclear bodies after interaction with ELF3 (PubMed:22327739).</text>
</comment>
<comment type="induction">
    <text evidence="3 6 7 9 10 11">Follows a light-dependent circadian-regulated expression with a peak in the evening, about 12 hours after dawn. Induced in seedlings and roots by continuous far-red light (FRc) via the phyA signaling pathway and by continuous red light (Rc) via the phyB signaling pathway. This light-mediated induction is repressed by ELF3, CCA1 and LHY.</text>
</comment>
<comment type="disruption phenotype">
    <text evidence="2 3 4 5 6 8 10 11">Impaired in their ability to sense day length leading to early flowering in non-inductive photoperiods (probably through the misexpression of CO), and elongated hypocotyls and petioles in short days (SD). Attenuated light-regulated expression of CCA1 and LHY, central oscillator components. Transient output rhythms with highly variable period lengths before becoming arrhythmic. Reduced responsiveness to continuous red, but not continuous far-red light, suggesting a role in phyB signaling but not phyA signaling.</text>
</comment>
<comment type="similarity">
    <text evidence="13">Belongs to the EARLY FLOWERING 4 family.</text>
</comment>
<protein>
    <recommendedName>
        <fullName>Protein EARLY FLOWERING 4</fullName>
    </recommendedName>
    <alternativeName>
        <fullName>Protein ARRHYTHMIC 44</fullName>
    </alternativeName>
</protein>
<proteinExistence type="evidence at protein level"/>
<sequence>MKRNGETKRRRNVAEEAEQGEDPAMWENLDRNFRQVQSVLDRNRSLIQQVNDNHQSRMADNMSKNVALIQELNGNISKVVNMYSDLNTSFSSGFHGGKNGHDGGGAAGTRA</sequence>
<feature type="chain" id="PRO_0000408502" description="Protein EARLY FLOWERING 4">
    <location>
        <begin position="1"/>
        <end position="111"/>
    </location>
</feature>
<feature type="region of interest" description="Disordered" evidence="1">
    <location>
        <begin position="1"/>
        <end position="26"/>
    </location>
</feature>
<feature type="region of interest" description="Disordered" evidence="1">
    <location>
        <begin position="90"/>
        <end position="111"/>
    </location>
</feature>
<feature type="compositionally biased region" description="Gly residues" evidence="1">
    <location>
        <begin position="94"/>
        <end position="111"/>
    </location>
</feature>
<feature type="modified residue" description="Phosphoserine" evidence="14">
    <location>
        <position position="45"/>
    </location>
</feature>
<feature type="mutagenesis site" description="In elf4-201; reduced homodimer stability associated with a slightly impaired circadian gene regulation." evidence="10">
    <original>E</original>
    <variation>K</variation>
    <location>
        <position position="15"/>
    </location>
</feature>
<feature type="mutagenesis site" description="In elf4-202; reduced homodimer stability associated with a slightly impaired circadian gene regulation." evidence="10">
    <original>E</original>
    <variation>K</variation>
    <location>
        <position position="18"/>
    </location>
</feature>
<feature type="mutagenesis site" description="In elf4-208; reduced homodimer stability associated with a slightly impaired circadian gene regulation." evidence="10">
    <original>P</original>
    <variation>L</variation>
    <location>
        <position position="23"/>
    </location>
</feature>
<feature type="mutagenesis site" description="In elf4-210; reduced homodimer stability associated with an impaired circadian gene regulation." evidence="10">
    <original>R</original>
    <variation>Q</variation>
    <location>
        <position position="31"/>
    </location>
</feature>
<feature type="mutagenesis site" description="In elf4-203; reduced homodimer stability associated with a strongly impaired circadian rhythm (short-period phenotype)." evidence="10">
    <original>R</original>
    <variation>W</variation>
    <location>
        <position position="31"/>
    </location>
</feature>
<feature type="mutagenesis site" description="In elf4-204; reduced homodimer stability associated with a slightly impaired circadian gene regulation." evidence="10">
    <original>R</original>
    <variation>K</variation>
    <location>
        <position position="34"/>
    </location>
</feature>
<feature type="mutagenesis site" description="In elf4-205; reduced homodimer stability associated with a slightly impaired circadian gene regulation." evidence="10">
    <original>R</original>
    <variation>K</variation>
    <location>
        <position position="44"/>
    </location>
</feature>
<feature type="mutagenesis site" description="In elf4-211; reduced homodimer stability associated with a slightly impaired circadian gene regulation." evidence="10">
    <original>S</original>
    <variation>L</variation>
    <location>
        <position position="45"/>
    </location>
</feature>
<feature type="mutagenesis site" description="In elf4-212; reduced homodimer stability associated with a strongly impaired circadian rhythm (short-period phenotype)." evidence="10">
    <original>A</original>
    <variation>V</variation>
    <location>
        <position position="59"/>
    </location>
</feature>
<feature type="mutagenesis site" description="In elf4-213; reduced homodimer stability associated with a slightly impaired circadian gene regulation." evidence="10">
    <original>G</original>
    <variation>R</variation>
    <location>
        <position position="74"/>
    </location>
</feature>
<keyword id="KW-0090">Biological rhythms</keyword>
<keyword id="KW-0287">Flowering</keyword>
<keyword id="KW-0539">Nucleus</keyword>
<keyword id="KW-0597">Phosphoprotein</keyword>
<keyword id="KW-0607">Phytochrome signaling pathway</keyword>
<keyword id="KW-1185">Reference proteome</keyword>
<accession>O04211</accession>